<keyword id="KW-0056">Arginine metabolism</keyword>
<keyword id="KW-0963">Cytoplasm</keyword>
<keyword id="KW-0378">Hydrolase</keyword>
<protein>
    <recommendedName>
        <fullName evidence="1">Arginine deiminase</fullName>
        <shortName evidence="1">ADI</shortName>
        <ecNumber evidence="1">3.5.3.6</ecNumber>
    </recommendedName>
    <alternativeName>
        <fullName evidence="1">Arginine dihydrolase</fullName>
        <shortName evidence="1">AD</shortName>
    </alternativeName>
</protein>
<evidence type="ECO:0000255" key="1">
    <source>
        <dbReference type="HAMAP-Rule" id="MF_00242"/>
    </source>
</evidence>
<organism>
    <name type="scientific">Streptococcus pneumoniae (strain 70585)</name>
    <dbReference type="NCBI Taxonomy" id="488221"/>
    <lineage>
        <taxon>Bacteria</taxon>
        <taxon>Bacillati</taxon>
        <taxon>Bacillota</taxon>
        <taxon>Bacilli</taxon>
        <taxon>Lactobacillales</taxon>
        <taxon>Streptococcaceae</taxon>
        <taxon>Streptococcus</taxon>
    </lineage>
</organism>
<name>ARCA_STRP7</name>
<reference key="1">
    <citation type="journal article" date="2010" name="Genome Biol.">
        <title>Structure and dynamics of the pan-genome of Streptococcus pneumoniae and closely related species.</title>
        <authorList>
            <person name="Donati C."/>
            <person name="Hiller N.L."/>
            <person name="Tettelin H."/>
            <person name="Muzzi A."/>
            <person name="Croucher N.J."/>
            <person name="Angiuoli S.V."/>
            <person name="Oggioni M."/>
            <person name="Dunning Hotopp J.C."/>
            <person name="Hu F.Z."/>
            <person name="Riley D.R."/>
            <person name="Covacci A."/>
            <person name="Mitchell T.J."/>
            <person name="Bentley S.D."/>
            <person name="Kilian M."/>
            <person name="Ehrlich G.D."/>
            <person name="Rappuoli R."/>
            <person name="Moxon E.R."/>
            <person name="Masignani V."/>
        </authorList>
    </citation>
    <scope>NUCLEOTIDE SEQUENCE [LARGE SCALE GENOMIC DNA]</scope>
    <source>
        <strain>70585</strain>
    </source>
</reference>
<comment type="catalytic activity">
    <reaction evidence="1">
        <text>L-arginine + H2O = L-citrulline + NH4(+)</text>
        <dbReference type="Rhea" id="RHEA:19597"/>
        <dbReference type="ChEBI" id="CHEBI:15377"/>
        <dbReference type="ChEBI" id="CHEBI:28938"/>
        <dbReference type="ChEBI" id="CHEBI:32682"/>
        <dbReference type="ChEBI" id="CHEBI:57743"/>
        <dbReference type="EC" id="3.5.3.6"/>
    </reaction>
</comment>
<comment type="pathway">
    <text evidence="1">Amino-acid degradation; L-arginine degradation via ADI pathway; carbamoyl phosphate from L-arginine: step 1/2.</text>
</comment>
<comment type="subcellular location">
    <subcellularLocation>
        <location evidence="1">Cytoplasm</location>
    </subcellularLocation>
</comment>
<comment type="similarity">
    <text evidence="1">Belongs to the arginine deiminase family.</text>
</comment>
<gene>
    <name evidence="1" type="primary">arcA</name>
    <name type="ordered locus">SP70585_2275</name>
</gene>
<feature type="chain" id="PRO_1000125323" description="Arginine deiminase">
    <location>
        <begin position="1"/>
        <end position="409"/>
    </location>
</feature>
<feature type="active site" description="Amidino-cysteine intermediate" evidence="1">
    <location>
        <position position="399"/>
    </location>
</feature>
<sequence>MSSHPIQVFSEIGKLKKVMLHRPGKELENLLPDYLERLLFDDIPFLEDAQKEHDAFAQALRDEGIEVLYLEQLAAESLTSPEIRDQFIEEYLDEANIRDRQTKVAIRELLHGIKDNQELVEKTMAGIQKVELPEIPDEAKDLTDLVESDYPFAIDPMPNLYFTRDPFATIGNAVSLNHMFADTRNRETLYGKYIFKYHPIYGGKVDLVYNREEDTRIEGGDELILSKDVLAVGISQRTDAASIEKLLVNIFKKNVGFKKVLAFEFANNRKFMHLDTVFTMVDYDKFTIHPEIEGDLHVYSVTYENEKLKIVEEKGDLAELLAQNLGVEKVHLIRCGGGNIVAAAREQWNDGSNTLTIAPGVVVVYDRNTVTNKILEEYGLRLIKIRGSELVRGRGGPRCMSMPFEREEV</sequence>
<accession>C1CAZ3</accession>
<dbReference type="EC" id="3.5.3.6" evidence="1"/>
<dbReference type="EMBL" id="CP000918">
    <property type="protein sequence ID" value="ACO16362.1"/>
    <property type="molecule type" value="Genomic_DNA"/>
</dbReference>
<dbReference type="RefSeq" id="WP_000094613.1">
    <property type="nucleotide sequence ID" value="NC_012468.1"/>
</dbReference>
<dbReference type="SMR" id="C1CAZ3"/>
<dbReference type="KEGG" id="snm:SP70585_2275"/>
<dbReference type="HOGENOM" id="CLU_052662_0_1_9"/>
<dbReference type="UniPathway" id="UPA00254">
    <property type="reaction ID" value="UER00364"/>
</dbReference>
<dbReference type="Proteomes" id="UP000002211">
    <property type="component" value="Chromosome"/>
</dbReference>
<dbReference type="GO" id="GO:0005737">
    <property type="term" value="C:cytoplasm"/>
    <property type="evidence" value="ECO:0007669"/>
    <property type="project" value="UniProtKB-SubCell"/>
</dbReference>
<dbReference type="GO" id="GO:0016990">
    <property type="term" value="F:arginine deiminase activity"/>
    <property type="evidence" value="ECO:0007669"/>
    <property type="project" value="UniProtKB-UniRule"/>
</dbReference>
<dbReference type="GO" id="GO:0019547">
    <property type="term" value="P:arginine catabolic process to ornithine"/>
    <property type="evidence" value="ECO:0007669"/>
    <property type="project" value="UniProtKB-UniRule"/>
</dbReference>
<dbReference type="GO" id="GO:0019546">
    <property type="term" value="P:arginine deiminase pathway"/>
    <property type="evidence" value="ECO:0007669"/>
    <property type="project" value="TreeGrafter"/>
</dbReference>
<dbReference type="FunFam" id="1.10.3930.10:FF:000003">
    <property type="entry name" value="Arginine deiminase"/>
    <property type="match status" value="1"/>
</dbReference>
<dbReference type="Gene3D" id="1.10.3930.10">
    <property type="entry name" value="Arginine deiminase"/>
    <property type="match status" value="1"/>
</dbReference>
<dbReference type="Gene3D" id="3.75.10.10">
    <property type="entry name" value="L-arginine/glycine Amidinotransferase, Chain A"/>
    <property type="match status" value="1"/>
</dbReference>
<dbReference type="HAMAP" id="MF_00242">
    <property type="entry name" value="Arg_deiminase"/>
    <property type="match status" value="1"/>
</dbReference>
<dbReference type="InterPro" id="IPR003876">
    <property type="entry name" value="Arg_deiminase"/>
</dbReference>
<dbReference type="NCBIfam" id="TIGR01078">
    <property type="entry name" value="arcA"/>
    <property type="match status" value="1"/>
</dbReference>
<dbReference type="NCBIfam" id="NF002381">
    <property type="entry name" value="PRK01388.1"/>
    <property type="match status" value="1"/>
</dbReference>
<dbReference type="PANTHER" id="PTHR47271">
    <property type="entry name" value="ARGININE DEIMINASE"/>
    <property type="match status" value="1"/>
</dbReference>
<dbReference type="PANTHER" id="PTHR47271:SF2">
    <property type="entry name" value="ARGININE DEIMINASE"/>
    <property type="match status" value="1"/>
</dbReference>
<dbReference type="Pfam" id="PF02274">
    <property type="entry name" value="ADI"/>
    <property type="match status" value="1"/>
</dbReference>
<dbReference type="PIRSF" id="PIRSF006356">
    <property type="entry name" value="Arg_deiminase"/>
    <property type="match status" value="1"/>
</dbReference>
<dbReference type="PRINTS" id="PR01466">
    <property type="entry name" value="ARGDEIMINASE"/>
</dbReference>
<dbReference type="SUPFAM" id="SSF55909">
    <property type="entry name" value="Pentein"/>
    <property type="match status" value="1"/>
</dbReference>
<proteinExistence type="inferred from homology"/>